<sequence>MSRIIVITSGKGGVGKTTTTSNIGIALAKLEQRVLLLDADVGLKNLDLLLGLENRIVYNGLDVLNGECRLTQALIQDKRQPNLTFFPLSSNQLKLPVTKEQINDLVDQLKNNYDFILIDSPAGIDEGFQVAIHTAKEAIVVVTPEVTSIRDADKVIGLLEAKGITDISLIINRLRPEMVKAENMMSVTDVKDILGIPLIGVVPDSEQVITASNRGEPLVLDDKVSIPGLAFINTARRIMGEAVEFIDFDSVTSTNPLKRLIKNLVKRSDKSY</sequence>
<comment type="function">
    <text evidence="1">ATPase required for the correct placement of the division site.</text>
</comment>
<comment type="subcellular location">
    <subcellularLocation>
        <location>Plastid</location>
        <location>Chloroplast</location>
    </subcellularLocation>
</comment>
<comment type="similarity">
    <text evidence="3">Belongs to the ParA family. MinD subfamily.</text>
</comment>
<accession>Q4G386</accession>
<evidence type="ECO:0000250" key="1"/>
<evidence type="ECO:0000250" key="2">
    <source>
        <dbReference type="UniProtKB" id="Q72H90"/>
    </source>
</evidence>
<evidence type="ECO:0000305" key="3"/>
<keyword id="KW-0067">ATP-binding</keyword>
<keyword id="KW-0131">Cell cycle</keyword>
<keyword id="KW-0132">Cell division</keyword>
<keyword id="KW-0150">Chloroplast</keyword>
<keyword id="KW-0547">Nucleotide-binding</keyword>
<keyword id="KW-0934">Plastid</keyword>
<keyword id="KW-0717">Septation</keyword>
<geneLocation type="chloroplast"/>
<feature type="chain" id="PRO_0000277445" description="Putative septum site-determining protein MinD">
    <location>
        <begin position="1"/>
        <end position="272"/>
    </location>
</feature>
<feature type="binding site" evidence="2">
    <location>
        <begin position="11"/>
        <end position="18"/>
    </location>
    <ligand>
        <name>ATP</name>
        <dbReference type="ChEBI" id="CHEBI:30616"/>
    </ligand>
</feature>
<name>MIND_EMIHU</name>
<dbReference type="EMBL" id="AY741371">
    <property type="protein sequence ID" value="AAX13880.1"/>
    <property type="molecule type" value="Genomic_DNA"/>
</dbReference>
<dbReference type="RefSeq" id="YP_277381.1">
    <property type="nucleotide sequence ID" value="NC_007288.1"/>
</dbReference>
<dbReference type="SMR" id="Q4G386"/>
<dbReference type="STRING" id="2903.Q4G386"/>
<dbReference type="GeneID" id="3562465"/>
<dbReference type="GO" id="GO:0009507">
    <property type="term" value="C:chloroplast"/>
    <property type="evidence" value="ECO:0007669"/>
    <property type="project" value="UniProtKB-SubCell"/>
</dbReference>
<dbReference type="GO" id="GO:0009898">
    <property type="term" value="C:cytoplasmic side of plasma membrane"/>
    <property type="evidence" value="ECO:0007669"/>
    <property type="project" value="TreeGrafter"/>
</dbReference>
<dbReference type="GO" id="GO:0005829">
    <property type="term" value="C:cytosol"/>
    <property type="evidence" value="ECO:0007669"/>
    <property type="project" value="TreeGrafter"/>
</dbReference>
<dbReference type="GO" id="GO:0005524">
    <property type="term" value="F:ATP binding"/>
    <property type="evidence" value="ECO:0007669"/>
    <property type="project" value="UniProtKB-KW"/>
</dbReference>
<dbReference type="GO" id="GO:0016887">
    <property type="term" value="F:ATP hydrolysis activity"/>
    <property type="evidence" value="ECO:0007669"/>
    <property type="project" value="InterPro"/>
</dbReference>
<dbReference type="GO" id="GO:0051301">
    <property type="term" value="P:cell division"/>
    <property type="evidence" value="ECO:0007669"/>
    <property type="project" value="UniProtKB-KW"/>
</dbReference>
<dbReference type="GO" id="GO:0051782">
    <property type="term" value="P:negative regulation of cell division"/>
    <property type="evidence" value="ECO:0007669"/>
    <property type="project" value="TreeGrafter"/>
</dbReference>
<dbReference type="CDD" id="cd02036">
    <property type="entry name" value="MinD"/>
    <property type="match status" value="1"/>
</dbReference>
<dbReference type="FunFam" id="3.40.50.300:FF:000068">
    <property type="entry name" value="Site-determining protein"/>
    <property type="match status" value="1"/>
</dbReference>
<dbReference type="Gene3D" id="3.40.50.300">
    <property type="entry name" value="P-loop containing nucleotide triphosphate hydrolases"/>
    <property type="match status" value="1"/>
</dbReference>
<dbReference type="InterPro" id="IPR002586">
    <property type="entry name" value="CobQ/CobB/MinD/ParA_Nub-bd_dom"/>
</dbReference>
<dbReference type="InterPro" id="IPR010223">
    <property type="entry name" value="MinD"/>
</dbReference>
<dbReference type="InterPro" id="IPR025501">
    <property type="entry name" value="MinD_FleN"/>
</dbReference>
<dbReference type="InterPro" id="IPR027417">
    <property type="entry name" value="P-loop_NTPase"/>
</dbReference>
<dbReference type="InterPro" id="IPR050625">
    <property type="entry name" value="ParA/MinD_ATPase"/>
</dbReference>
<dbReference type="NCBIfam" id="TIGR01968">
    <property type="entry name" value="minD_bact"/>
    <property type="match status" value="1"/>
</dbReference>
<dbReference type="PANTHER" id="PTHR43384:SF6">
    <property type="entry name" value="SEPTUM SITE-DETERMINING PROTEIN MIND HOMOLOG, CHLOROPLASTIC"/>
    <property type="match status" value="1"/>
</dbReference>
<dbReference type="PANTHER" id="PTHR43384">
    <property type="entry name" value="SEPTUM SITE-DETERMINING PROTEIN MIND HOMOLOG, CHLOROPLASTIC-RELATED"/>
    <property type="match status" value="1"/>
</dbReference>
<dbReference type="Pfam" id="PF01656">
    <property type="entry name" value="CbiA"/>
    <property type="match status" value="1"/>
</dbReference>
<dbReference type="PIRSF" id="PIRSF003092">
    <property type="entry name" value="MinD"/>
    <property type="match status" value="1"/>
</dbReference>
<dbReference type="SUPFAM" id="SSF52540">
    <property type="entry name" value="P-loop containing nucleoside triphosphate hydrolases"/>
    <property type="match status" value="1"/>
</dbReference>
<reference key="1">
    <citation type="journal article" date="2005" name="DNA Res.">
        <title>The complete plastid genome sequence of the haptophyte Emiliania huxleyi: a comparison to other plastid genomes.</title>
        <authorList>
            <person name="Sanchez-Puerta M.V."/>
            <person name="Bachvaroff T.R."/>
            <person name="Delwiche C.F."/>
        </authorList>
    </citation>
    <scope>NUCLEOTIDE SEQUENCE [LARGE SCALE GENOMIC DNA]</scope>
    <source>
        <strain>CCMP373 / CSIRO-CS-57 / BT6</strain>
    </source>
</reference>
<organism>
    <name type="scientific">Emiliania huxleyi</name>
    <name type="common">Coccolithophore</name>
    <name type="synonym">Pontosphaera huxleyi</name>
    <dbReference type="NCBI Taxonomy" id="2903"/>
    <lineage>
        <taxon>Eukaryota</taxon>
        <taxon>Haptista</taxon>
        <taxon>Haptophyta</taxon>
        <taxon>Prymnesiophyceae</taxon>
        <taxon>Isochrysidales</taxon>
        <taxon>Noelaerhabdaceae</taxon>
        <taxon>Emiliania</taxon>
    </lineage>
</organism>
<proteinExistence type="inferred from homology"/>
<gene>
    <name type="primary">minD</name>
</gene>
<protein>
    <recommendedName>
        <fullName>Putative septum site-determining protein MinD</fullName>
    </recommendedName>
</protein>